<sequence length="154" mass="17434">MRYHQYYPVDIVNGPGTRCTLFVSGCVHECPGCYNKSTWRLNSGQPFTKEMEDKIIADLNDTRIHRQGISLSGGDPLHPQNVPDILALVQRIHAECPGKDIWVWTGYKLDELNAAQMQVVDLINVLVDGKFVQDLKDPALIWRGSSNQVVHHLR</sequence>
<evidence type="ECO:0000250" key="1">
    <source>
        <dbReference type="UniProtKB" id="P0A9N4"/>
    </source>
</evidence>
<evidence type="ECO:0000250" key="2">
    <source>
        <dbReference type="UniProtKB" id="P0A9N8"/>
    </source>
</evidence>
<evidence type="ECO:0000305" key="3"/>
<comment type="function">
    <text evidence="2">Activation of anaerobic ribonucleoside-triphosphate reductase under anaerobic conditions by generation of an organic free radical, using S-adenosylmethionine and reduced flavodoxin as cosubstrates to produce 5'-deoxy-adenosine.</text>
</comment>
<comment type="catalytic activity">
    <reaction evidence="2">
        <text>glycyl-[protein] + reduced [flavodoxin] + S-adenosyl-L-methionine = glycin-2-yl radical-[protein] + semiquinone [flavodoxin] + 5'-deoxyadenosine + L-methionine + H(+)</text>
        <dbReference type="Rhea" id="RHEA:61976"/>
        <dbReference type="Rhea" id="RHEA-COMP:10622"/>
        <dbReference type="Rhea" id="RHEA-COMP:14480"/>
        <dbReference type="Rhea" id="RHEA-COMP:15993"/>
        <dbReference type="Rhea" id="RHEA-COMP:15994"/>
        <dbReference type="ChEBI" id="CHEBI:15378"/>
        <dbReference type="ChEBI" id="CHEBI:17319"/>
        <dbReference type="ChEBI" id="CHEBI:29947"/>
        <dbReference type="ChEBI" id="CHEBI:32722"/>
        <dbReference type="ChEBI" id="CHEBI:57618"/>
        <dbReference type="ChEBI" id="CHEBI:57844"/>
        <dbReference type="ChEBI" id="CHEBI:59789"/>
        <dbReference type="ChEBI" id="CHEBI:140311"/>
    </reaction>
</comment>
<comment type="cofactor">
    <cofactor evidence="2">
        <name>[4Fe-4S] cluster</name>
        <dbReference type="ChEBI" id="CHEBI:49883"/>
    </cofactor>
    <text evidence="1">Binds 1 [4Fe-4S] cluster. The cluster is coordinated with 3 cysteines and an exchangeable S-adenosyl-L-methionine.</text>
</comment>
<comment type="subunit">
    <text evidence="2">Forms a tetramer composed of two NrdD and two NrdG subunits.</text>
</comment>
<comment type="subcellular location">
    <subcellularLocation>
        <location evidence="2">Cytoplasm</location>
    </subcellularLocation>
</comment>
<comment type="similarity">
    <text evidence="3">Belongs to the organic radical-activating enzymes family.</text>
</comment>
<feature type="chain" id="PRO_0000200540" description="Anaerobic ribonucleoside-triphosphate reductase-activating protein">
    <location>
        <begin position="1"/>
        <end position="154"/>
    </location>
</feature>
<feature type="binding site" evidence="1">
    <location>
        <position position="26"/>
    </location>
    <ligand>
        <name>[4Fe-4S] cluster</name>
        <dbReference type="ChEBI" id="CHEBI:49883"/>
        <note>4Fe-4S-S-AdoMet</note>
    </ligand>
</feature>
<feature type="binding site" evidence="1">
    <location>
        <position position="30"/>
    </location>
    <ligand>
        <name>[4Fe-4S] cluster</name>
        <dbReference type="ChEBI" id="CHEBI:49883"/>
        <note>4Fe-4S-S-AdoMet</note>
    </ligand>
</feature>
<feature type="binding site" evidence="1">
    <location>
        <begin position="32"/>
        <end position="34"/>
    </location>
    <ligand>
        <name>S-adenosyl-L-methionine</name>
        <dbReference type="ChEBI" id="CHEBI:59789"/>
    </ligand>
</feature>
<feature type="binding site" evidence="1">
    <location>
        <position position="33"/>
    </location>
    <ligand>
        <name>[4Fe-4S] cluster</name>
        <dbReference type="ChEBI" id="CHEBI:49883"/>
        <note>4Fe-4S-S-AdoMet</note>
    </ligand>
</feature>
<feature type="binding site" evidence="1">
    <location>
        <position position="74"/>
    </location>
    <ligand>
        <name>S-adenosyl-L-methionine</name>
        <dbReference type="ChEBI" id="CHEBI:59789"/>
    </ligand>
</feature>
<feature type="sequence conflict" description="In Ref. 1; AAF60352." evidence="3" ref="1">
    <original>E</original>
    <variation>K</variation>
    <location>
        <position position="111"/>
    </location>
</feature>
<feature type="sequence conflict" description="In Ref. 1; AAF60352." evidence="3" ref="1">
    <original>D</original>
    <variation>N</variation>
    <location>
        <position position="137"/>
    </location>
</feature>
<proteinExistence type="inferred from homology"/>
<name>NRDG_SALTY</name>
<keyword id="KW-0004">4Fe-4S</keyword>
<keyword id="KW-0963">Cytoplasm</keyword>
<keyword id="KW-0408">Iron</keyword>
<keyword id="KW-0411">Iron-sulfur</keyword>
<keyword id="KW-0479">Metal-binding</keyword>
<keyword id="KW-0560">Oxidoreductase</keyword>
<keyword id="KW-1185">Reference proteome</keyword>
<keyword id="KW-0949">S-adenosyl-L-methionine</keyword>
<reference key="1">
    <citation type="submission" date="2000-03" db="EMBL/GenBank/DDBJ databases">
        <title>Genetic regulation and mutant characterization of anaerobic ribonucleotide reductase in Salmonella typhimurium.</title>
        <authorList>
            <person name="Ng W."/>
            <person name="Wong K."/>
            <person name="Kwan H."/>
        </authorList>
    </citation>
    <scope>NUCLEOTIDE SEQUENCE [GENOMIC DNA]</scope>
</reference>
<reference key="2">
    <citation type="journal article" date="2001" name="Nature">
        <title>Complete genome sequence of Salmonella enterica serovar Typhimurium LT2.</title>
        <authorList>
            <person name="McClelland M."/>
            <person name="Sanderson K.E."/>
            <person name="Spieth J."/>
            <person name="Clifton S.W."/>
            <person name="Latreille P."/>
            <person name="Courtney L."/>
            <person name="Porwollik S."/>
            <person name="Ali J."/>
            <person name="Dante M."/>
            <person name="Du F."/>
            <person name="Hou S."/>
            <person name="Layman D."/>
            <person name="Leonard S."/>
            <person name="Nguyen C."/>
            <person name="Scott K."/>
            <person name="Holmes A."/>
            <person name="Grewal N."/>
            <person name="Mulvaney E."/>
            <person name="Ryan E."/>
            <person name="Sun H."/>
            <person name="Florea L."/>
            <person name="Miller W."/>
            <person name="Stoneking T."/>
            <person name="Nhan M."/>
            <person name="Waterston R."/>
            <person name="Wilson R.K."/>
        </authorList>
    </citation>
    <scope>NUCLEOTIDE SEQUENCE [LARGE SCALE GENOMIC DNA]</scope>
    <source>
        <strain>LT2 / SGSC1412 / ATCC 700720</strain>
    </source>
</reference>
<accession>Q9L645</accession>
<dbReference type="EC" id="1.97.1.-" evidence="2"/>
<dbReference type="EMBL" id="AF242390">
    <property type="protein sequence ID" value="AAF60352.1"/>
    <property type="molecule type" value="Genomic_DNA"/>
</dbReference>
<dbReference type="EMBL" id="AE006468">
    <property type="protein sequence ID" value="AAL23271.1"/>
    <property type="molecule type" value="Genomic_DNA"/>
</dbReference>
<dbReference type="RefSeq" id="NP_463312.1">
    <property type="nucleotide sequence ID" value="NC_003197.2"/>
</dbReference>
<dbReference type="RefSeq" id="WP_001268859.1">
    <property type="nucleotide sequence ID" value="NC_003197.2"/>
</dbReference>
<dbReference type="SMR" id="Q9L645"/>
<dbReference type="STRING" id="99287.STM4451"/>
<dbReference type="PaxDb" id="99287-STM4451"/>
<dbReference type="DNASU" id="1255977"/>
<dbReference type="GeneID" id="1255977"/>
<dbReference type="KEGG" id="stm:STM4451"/>
<dbReference type="PATRIC" id="fig|99287.12.peg.4681"/>
<dbReference type="HOGENOM" id="CLU_089926_2_1_6"/>
<dbReference type="OMA" id="NDTRIPR"/>
<dbReference type="PhylomeDB" id="Q9L645"/>
<dbReference type="BioCyc" id="SENT99287:STM4451-MONOMER"/>
<dbReference type="Proteomes" id="UP000001014">
    <property type="component" value="Chromosome"/>
</dbReference>
<dbReference type="GO" id="GO:0005737">
    <property type="term" value="C:cytoplasm"/>
    <property type="evidence" value="ECO:0007669"/>
    <property type="project" value="UniProtKB-SubCell"/>
</dbReference>
<dbReference type="GO" id="GO:0051539">
    <property type="term" value="F:4 iron, 4 sulfur cluster binding"/>
    <property type="evidence" value="ECO:0007669"/>
    <property type="project" value="UniProtKB-KW"/>
</dbReference>
<dbReference type="GO" id="GO:0043365">
    <property type="term" value="F:[formate-C-acetyltransferase]-activating enzyme activity"/>
    <property type="evidence" value="ECO:0007669"/>
    <property type="project" value="InterPro"/>
</dbReference>
<dbReference type="GO" id="GO:0046872">
    <property type="term" value="F:metal ion binding"/>
    <property type="evidence" value="ECO:0007669"/>
    <property type="project" value="UniProtKB-KW"/>
</dbReference>
<dbReference type="CDD" id="cd01335">
    <property type="entry name" value="Radical_SAM"/>
    <property type="match status" value="1"/>
</dbReference>
<dbReference type="FunFam" id="3.20.20.70:FF:000087">
    <property type="entry name" value="Anaerobic ribonucleoside-triphosphate reductase-activating protein"/>
    <property type="match status" value="1"/>
</dbReference>
<dbReference type="Gene3D" id="3.20.20.70">
    <property type="entry name" value="Aldolase class I"/>
    <property type="match status" value="1"/>
</dbReference>
<dbReference type="InterPro" id="IPR013785">
    <property type="entry name" value="Aldolase_TIM"/>
</dbReference>
<dbReference type="InterPro" id="IPR012837">
    <property type="entry name" value="NrdG"/>
</dbReference>
<dbReference type="InterPro" id="IPR034457">
    <property type="entry name" value="Organic_radical-activating"/>
</dbReference>
<dbReference type="InterPro" id="IPR001989">
    <property type="entry name" value="Radical_activat_CS"/>
</dbReference>
<dbReference type="NCBIfam" id="TIGR02491">
    <property type="entry name" value="NrdG"/>
    <property type="match status" value="1"/>
</dbReference>
<dbReference type="NCBIfam" id="NF008335">
    <property type="entry name" value="PRK11121.1"/>
    <property type="match status" value="1"/>
</dbReference>
<dbReference type="PANTHER" id="PTHR30352:SF2">
    <property type="entry name" value="ANAEROBIC RIBONUCLEOSIDE-TRIPHOSPHATE REDUCTASE-ACTIVATING PROTEIN"/>
    <property type="match status" value="1"/>
</dbReference>
<dbReference type="PANTHER" id="PTHR30352">
    <property type="entry name" value="PYRUVATE FORMATE-LYASE-ACTIVATING ENZYME"/>
    <property type="match status" value="1"/>
</dbReference>
<dbReference type="Pfam" id="PF13353">
    <property type="entry name" value="Fer4_12"/>
    <property type="match status" value="1"/>
</dbReference>
<dbReference type="PIRSF" id="PIRSF000368">
    <property type="entry name" value="NrdG"/>
    <property type="match status" value="1"/>
</dbReference>
<dbReference type="SFLD" id="SFLDF00299">
    <property type="entry name" value="anaerobic_ribonucleoside-triph"/>
    <property type="match status" value="1"/>
</dbReference>
<dbReference type="SFLD" id="SFLDG01066">
    <property type="entry name" value="organic_radical-activating_enz"/>
    <property type="match status" value="1"/>
</dbReference>
<dbReference type="SUPFAM" id="SSF102114">
    <property type="entry name" value="Radical SAM enzymes"/>
    <property type="match status" value="1"/>
</dbReference>
<dbReference type="PROSITE" id="PS01087">
    <property type="entry name" value="RADICAL_ACTIVATING"/>
    <property type="match status" value="1"/>
</dbReference>
<organism>
    <name type="scientific">Salmonella typhimurium (strain LT2 / SGSC1412 / ATCC 700720)</name>
    <dbReference type="NCBI Taxonomy" id="99287"/>
    <lineage>
        <taxon>Bacteria</taxon>
        <taxon>Pseudomonadati</taxon>
        <taxon>Pseudomonadota</taxon>
        <taxon>Gammaproteobacteria</taxon>
        <taxon>Enterobacterales</taxon>
        <taxon>Enterobacteriaceae</taxon>
        <taxon>Salmonella</taxon>
    </lineage>
</organism>
<protein>
    <recommendedName>
        <fullName evidence="2">Anaerobic ribonucleoside-triphosphate reductase-activating protein</fullName>
        <ecNumber evidence="2">1.97.1.-</ecNumber>
    </recommendedName>
    <alternativeName>
        <fullName evidence="2">Class III anaerobic ribonucleotide reductase small component</fullName>
    </alternativeName>
</protein>
<gene>
    <name type="primary">nrdG</name>
    <name type="ordered locus">STM4451</name>
</gene>